<sequence length="379" mass="42755">MTNIRKTHPLIKIINESFIDLPTPSNISAWWNFGSLMGVCLVLQILTGLFLAMHYTSDTTTAFSSVTHICRDVNYGWIIRYMHANGASMFFICLFMHVGRGMYYGSYLFMETWNIGILLLFTVMATAFMGYVLPWGQMSFWGATVITNLLSAIPYIGTNLVEWIWGGFSVDKATLTRFFAFHFILPFIISALAVMHLLFLHETGSNNPSGISSNSDKIPFHPYYTIKDILGLLIMLAMLMTLVLFSPDLLGDPDNYTPANPLNTPPHIKPEWYFLFAYAILRSIPNKLGGVLALILSIMVLAITPLLHTSNQRSMTFRPLSQCLFWLLVADLLTLTWIGGQPVEHPFIIIGQLASILYFSIILIFMPISGAIENQLLKW</sequence>
<organism>
    <name type="scientific">Crossarchus obscurus</name>
    <name type="common">Long-nosed cusimanse</name>
    <name type="synonym">Mungos obscurus</name>
    <dbReference type="NCBI Taxonomy" id="71111"/>
    <lineage>
        <taxon>Eukaryota</taxon>
        <taxon>Metazoa</taxon>
        <taxon>Chordata</taxon>
        <taxon>Craniata</taxon>
        <taxon>Vertebrata</taxon>
        <taxon>Euteleostomi</taxon>
        <taxon>Mammalia</taxon>
        <taxon>Eutheria</taxon>
        <taxon>Laurasiatheria</taxon>
        <taxon>Carnivora</taxon>
        <taxon>Feliformia</taxon>
        <taxon>Herpestidae</taxon>
        <taxon>Crossarchus</taxon>
    </lineage>
</organism>
<keyword id="KW-0249">Electron transport</keyword>
<keyword id="KW-0349">Heme</keyword>
<keyword id="KW-0408">Iron</keyword>
<keyword id="KW-0472">Membrane</keyword>
<keyword id="KW-0479">Metal-binding</keyword>
<keyword id="KW-0496">Mitochondrion</keyword>
<keyword id="KW-0999">Mitochondrion inner membrane</keyword>
<keyword id="KW-0679">Respiratory chain</keyword>
<keyword id="KW-0812">Transmembrane</keyword>
<keyword id="KW-1133">Transmembrane helix</keyword>
<keyword id="KW-0813">Transport</keyword>
<keyword id="KW-0830">Ubiquinone</keyword>
<accession>Q85PN7</accession>
<protein>
    <recommendedName>
        <fullName>Cytochrome b</fullName>
    </recommendedName>
    <alternativeName>
        <fullName>Complex III subunit 3</fullName>
    </alternativeName>
    <alternativeName>
        <fullName>Complex III subunit III</fullName>
    </alternativeName>
    <alternativeName>
        <fullName>Cytochrome b-c1 complex subunit 3</fullName>
    </alternativeName>
    <alternativeName>
        <fullName>Ubiquinol-cytochrome-c reductase complex cytochrome b subunit</fullName>
    </alternativeName>
</protein>
<comment type="function">
    <text evidence="2">Component of the ubiquinol-cytochrome c reductase complex (complex III or cytochrome b-c1 complex) that is part of the mitochondrial respiratory chain. The b-c1 complex mediates electron transfer from ubiquinol to cytochrome c. Contributes to the generation of a proton gradient across the mitochondrial membrane that is then used for ATP synthesis.</text>
</comment>
<comment type="cofactor">
    <cofactor evidence="2">
        <name>heme b</name>
        <dbReference type="ChEBI" id="CHEBI:60344"/>
    </cofactor>
    <text evidence="2">Binds 2 heme b groups non-covalently.</text>
</comment>
<comment type="subunit">
    <text evidence="2">The cytochrome bc1 complex contains 11 subunits: 3 respiratory subunits (MT-CYB, CYC1 and UQCRFS1), 2 core proteins (UQCRC1 and UQCRC2) and 6 low-molecular weight proteins (UQCRH/QCR6, UQCRB/QCR7, UQCRQ/QCR8, UQCR10/QCR9, UQCR11/QCR10 and a cleavage product of UQCRFS1). This cytochrome bc1 complex then forms a dimer.</text>
</comment>
<comment type="subcellular location">
    <subcellularLocation>
        <location evidence="2">Mitochondrion inner membrane</location>
        <topology evidence="2">Multi-pass membrane protein</topology>
    </subcellularLocation>
</comment>
<comment type="miscellaneous">
    <text evidence="1">Heme 1 (or BL or b562) is low-potential and absorbs at about 562 nm, and heme 2 (or BH or b566) is high-potential and absorbs at about 566 nm.</text>
</comment>
<comment type="similarity">
    <text evidence="3 4">Belongs to the cytochrome b family.</text>
</comment>
<comment type="caution">
    <text evidence="2">The full-length protein contains only eight transmembrane helices, not nine as predicted by bioinformatics tools.</text>
</comment>
<proteinExistence type="inferred from homology"/>
<feature type="chain" id="PRO_0000060830" description="Cytochrome b">
    <location>
        <begin position="1"/>
        <end position="379"/>
    </location>
</feature>
<feature type="transmembrane region" description="Helical" evidence="2">
    <location>
        <begin position="33"/>
        <end position="53"/>
    </location>
</feature>
<feature type="transmembrane region" description="Helical" evidence="2">
    <location>
        <begin position="77"/>
        <end position="98"/>
    </location>
</feature>
<feature type="transmembrane region" description="Helical" evidence="2">
    <location>
        <begin position="113"/>
        <end position="133"/>
    </location>
</feature>
<feature type="transmembrane region" description="Helical" evidence="2">
    <location>
        <begin position="178"/>
        <end position="198"/>
    </location>
</feature>
<feature type="transmembrane region" description="Helical" evidence="2">
    <location>
        <begin position="226"/>
        <end position="246"/>
    </location>
</feature>
<feature type="transmembrane region" description="Helical" evidence="2">
    <location>
        <begin position="288"/>
        <end position="308"/>
    </location>
</feature>
<feature type="transmembrane region" description="Helical" evidence="2">
    <location>
        <begin position="320"/>
        <end position="340"/>
    </location>
</feature>
<feature type="transmembrane region" description="Helical" evidence="2">
    <location>
        <begin position="347"/>
        <end position="367"/>
    </location>
</feature>
<feature type="binding site" description="axial binding residue" evidence="2">
    <location>
        <position position="83"/>
    </location>
    <ligand>
        <name>heme b</name>
        <dbReference type="ChEBI" id="CHEBI:60344"/>
        <label>b562</label>
    </ligand>
    <ligandPart>
        <name>Fe</name>
        <dbReference type="ChEBI" id="CHEBI:18248"/>
    </ligandPart>
</feature>
<feature type="binding site" description="axial binding residue" evidence="2">
    <location>
        <position position="97"/>
    </location>
    <ligand>
        <name>heme b</name>
        <dbReference type="ChEBI" id="CHEBI:60344"/>
        <label>b566</label>
    </ligand>
    <ligandPart>
        <name>Fe</name>
        <dbReference type="ChEBI" id="CHEBI:18248"/>
    </ligandPart>
</feature>
<feature type="binding site" description="axial binding residue" evidence="2">
    <location>
        <position position="182"/>
    </location>
    <ligand>
        <name>heme b</name>
        <dbReference type="ChEBI" id="CHEBI:60344"/>
        <label>b562</label>
    </ligand>
    <ligandPart>
        <name>Fe</name>
        <dbReference type="ChEBI" id="CHEBI:18248"/>
    </ligandPart>
</feature>
<feature type="binding site" description="axial binding residue" evidence="2">
    <location>
        <position position="196"/>
    </location>
    <ligand>
        <name>heme b</name>
        <dbReference type="ChEBI" id="CHEBI:60344"/>
        <label>b566</label>
    </ligand>
    <ligandPart>
        <name>Fe</name>
        <dbReference type="ChEBI" id="CHEBI:18248"/>
    </ligandPart>
</feature>
<feature type="binding site" evidence="2">
    <location>
        <position position="201"/>
    </location>
    <ligand>
        <name>a ubiquinone</name>
        <dbReference type="ChEBI" id="CHEBI:16389"/>
    </ligand>
</feature>
<reference key="1">
    <citation type="journal article" date="2003" name="Nature">
        <title>Single origin of Malagasy Carnivora from an African ancestor.</title>
        <authorList>
            <person name="Yoder A.D."/>
            <person name="Burns M.M."/>
            <person name="Zehr S."/>
            <person name="Delefosse T."/>
            <person name="Veron G."/>
            <person name="Goodman S.M."/>
            <person name="Flynn J.J."/>
        </authorList>
    </citation>
    <scope>NUCLEOTIDE SEQUENCE [GENOMIC DNA]</scope>
</reference>
<dbReference type="EMBL" id="AY170101">
    <property type="protein sequence ID" value="AAN85620.1"/>
    <property type="molecule type" value="Genomic_DNA"/>
</dbReference>
<dbReference type="SMR" id="Q85PN7"/>
<dbReference type="GO" id="GO:0005743">
    <property type="term" value="C:mitochondrial inner membrane"/>
    <property type="evidence" value="ECO:0007669"/>
    <property type="project" value="UniProtKB-SubCell"/>
</dbReference>
<dbReference type="GO" id="GO:0045275">
    <property type="term" value="C:respiratory chain complex III"/>
    <property type="evidence" value="ECO:0007669"/>
    <property type="project" value="InterPro"/>
</dbReference>
<dbReference type="GO" id="GO:0046872">
    <property type="term" value="F:metal ion binding"/>
    <property type="evidence" value="ECO:0007669"/>
    <property type="project" value="UniProtKB-KW"/>
</dbReference>
<dbReference type="GO" id="GO:0008121">
    <property type="term" value="F:ubiquinol-cytochrome-c reductase activity"/>
    <property type="evidence" value="ECO:0007669"/>
    <property type="project" value="InterPro"/>
</dbReference>
<dbReference type="GO" id="GO:0006122">
    <property type="term" value="P:mitochondrial electron transport, ubiquinol to cytochrome c"/>
    <property type="evidence" value="ECO:0007669"/>
    <property type="project" value="TreeGrafter"/>
</dbReference>
<dbReference type="CDD" id="cd00290">
    <property type="entry name" value="cytochrome_b_C"/>
    <property type="match status" value="1"/>
</dbReference>
<dbReference type="CDD" id="cd00284">
    <property type="entry name" value="Cytochrome_b_N"/>
    <property type="match status" value="1"/>
</dbReference>
<dbReference type="FunFam" id="1.20.810.10:FF:000002">
    <property type="entry name" value="Cytochrome b"/>
    <property type="match status" value="1"/>
</dbReference>
<dbReference type="Gene3D" id="1.20.810.10">
    <property type="entry name" value="Cytochrome Bc1 Complex, Chain C"/>
    <property type="match status" value="1"/>
</dbReference>
<dbReference type="InterPro" id="IPR005798">
    <property type="entry name" value="Cyt_b/b6_C"/>
</dbReference>
<dbReference type="InterPro" id="IPR036150">
    <property type="entry name" value="Cyt_b/b6_C_sf"/>
</dbReference>
<dbReference type="InterPro" id="IPR005797">
    <property type="entry name" value="Cyt_b/b6_N"/>
</dbReference>
<dbReference type="InterPro" id="IPR027387">
    <property type="entry name" value="Cytb/b6-like_sf"/>
</dbReference>
<dbReference type="InterPro" id="IPR030689">
    <property type="entry name" value="Cytochrome_b"/>
</dbReference>
<dbReference type="InterPro" id="IPR048260">
    <property type="entry name" value="Cytochrome_b_C_euk/bac"/>
</dbReference>
<dbReference type="InterPro" id="IPR048259">
    <property type="entry name" value="Cytochrome_b_N_euk/bac"/>
</dbReference>
<dbReference type="InterPro" id="IPR016174">
    <property type="entry name" value="Di-haem_cyt_TM"/>
</dbReference>
<dbReference type="PANTHER" id="PTHR19271">
    <property type="entry name" value="CYTOCHROME B"/>
    <property type="match status" value="1"/>
</dbReference>
<dbReference type="PANTHER" id="PTHR19271:SF16">
    <property type="entry name" value="CYTOCHROME B"/>
    <property type="match status" value="1"/>
</dbReference>
<dbReference type="Pfam" id="PF00032">
    <property type="entry name" value="Cytochrom_B_C"/>
    <property type="match status" value="1"/>
</dbReference>
<dbReference type="Pfam" id="PF00033">
    <property type="entry name" value="Cytochrome_B"/>
    <property type="match status" value="1"/>
</dbReference>
<dbReference type="PIRSF" id="PIRSF038885">
    <property type="entry name" value="COB"/>
    <property type="match status" value="1"/>
</dbReference>
<dbReference type="SUPFAM" id="SSF81648">
    <property type="entry name" value="a domain/subunit of cytochrome bc1 complex (Ubiquinol-cytochrome c reductase)"/>
    <property type="match status" value="1"/>
</dbReference>
<dbReference type="SUPFAM" id="SSF81342">
    <property type="entry name" value="Transmembrane di-heme cytochromes"/>
    <property type="match status" value="1"/>
</dbReference>
<dbReference type="PROSITE" id="PS51003">
    <property type="entry name" value="CYTB_CTER"/>
    <property type="match status" value="1"/>
</dbReference>
<dbReference type="PROSITE" id="PS51002">
    <property type="entry name" value="CYTB_NTER"/>
    <property type="match status" value="1"/>
</dbReference>
<gene>
    <name type="primary">MT-CYB</name>
    <name type="synonym">COB</name>
    <name type="synonym">CYTB</name>
    <name type="synonym">MTCYB</name>
</gene>
<evidence type="ECO:0000250" key="1"/>
<evidence type="ECO:0000250" key="2">
    <source>
        <dbReference type="UniProtKB" id="P00157"/>
    </source>
</evidence>
<evidence type="ECO:0000255" key="3">
    <source>
        <dbReference type="PROSITE-ProRule" id="PRU00967"/>
    </source>
</evidence>
<evidence type="ECO:0000255" key="4">
    <source>
        <dbReference type="PROSITE-ProRule" id="PRU00968"/>
    </source>
</evidence>
<geneLocation type="mitochondrion"/>
<name>CYB_CROOB</name>